<keyword id="KW-1003">Cell membrane</keyword>
<keyword id="KW-0868">Chloride</keyword>
<keyword id="KW-0869">Chloride channel</keyword>
<keyword id="KW-0968">Cytoplasmic vesicle</keyword>
<keyword id="KW-1015">Disulfide bond</keyword>
<keyword id="KW-0325">Glycoprotein</keyword>
<keyword id="KW-0407">Ion channel</keyword>
<keyword id="KW-0406">Ion transport</keyword>
<keyword id="KW-1071">Ligand-gated ion channel</keyword>
<keyword id="KW-0472">Membrane</keyword>
<keyword id="KW-0628">Postsynaptic cell membrane</keyword>
<keyword id="KW-0675">Receptor</keyword>
<keyword id="KW-1185">Reference proteome</keyword>
<keyword id="KW-0732">Signal</keyword>
<keyword id="KW-0770">Synapse</keyword>
<keyword id="KW-0812">Transmembrane</keyword>
<keyword id="KW-1133">Transmembrane helix</keyword>
<keyword id="KW-0813">Transport</keyword>
<proteinExistence type="evidence at protein level"/>
<accession>P63079</accession>
<accession>P15433</accession>
<gene>
    <name evidence="18" type="primary">Gabrb3</name>
    <name type="synonym">Gabrb-3</name>
</gene>
<feature type="signal peptide" evidence="3">
    <location>
        <begin position="1"/>
        <end position="25"/>
    </location>
</feature>
<feature type="chain" id="PRO_0000000464" description="Gamma-aminobutyric acid receptor subunit beta-3">
    <location>
        <begin position="26"/>
        <end position="473"/>
    </location>
</feature>
<feature type="topological domain" description="Extracellular" evidence="1">
    <location>
        <begin position="26"/>
        <end position="246"/>
    </location>
</feature>
<feature type="transmembrane region" description="Helical" evidence="1">
    <location>
        <begin position="247"/>
        <end position="267"/>
    </location>
</feature>
<feature type="topological domain" description="Cytoplasmic" evidence="1">
    <location>
        <begin position="268"/>
        <end position="271"/>
    </location>
</feature>
<feature type="transmembrane region" description="Helical" evidence="1">
    <location>
        <begin position="272"/>
        <end position="292"/>
    </location>
</feature>
<feature type="topological domain" description="Extracellular" evidence="1">
    <location>
        <begin position="293"/>
        <end position="304"/>
    </location>
</feature>
<feature type="transmembrane region" description="Helical" evidence="1">
    <location>
        <begin position="305"/>
        <end position="328"/>
    </location>
</feature>
<feature type="topological domain" description="Cytoplasmic" evidence="1">
    <location>
        <begin position="329"/>
        <end position="447"/>
    </location>
</feature>
<feature type="transmembrane region" description="Helical" evidence="1">
    <location>
        <begin position="448"/>
        <end position="470"/>
    </location>
</feature>
<feature type="topological domain" description="Extracellular" evidence="17">
    <location>
        <begin position="471"/>
        <end position="473"/>
    </location>
</feature>
<feature type="binding site" description="in chain B" evidence="1">
    <location>
        <position position="122"/>
    </location>
    <ligand>
        <name>histamine</name>
        <dbReference type="ChEBI" id="CHEBI:58432"/>
        <note>ligand shared between two neighboring beta subunits</note>
    </ligand>
</feature>
<feature type="binding site" description="in chain A" evidence="1">
    <location>
        <position position="180"/>
    </location>
    <ligand>
        <name>4-aminobutanoate</name>
        <dbReference type="ChEBI" id="CHEBI:59888"/>
        <note>ligand shared with the neighboring alpha subunit</note>
    </ligand>
</feature>
<feature type="binding site" description="in chain B" evidence="1">
    <location>
        <begin position="181"/>
        <end position="182"/>
    </location>
    <ligand>
        <name>histamine</name>
        <dbReference type="ChEBI" id="CHEBI:58432"/>
        <note>ligand shared between two neighboring beta subunits</note>
    </ligand>
</feature>
<feature type="binding site" description="in chain A" evidence="1">
    <location>
        <position position="182"/>
    </location>
    <ligand>
        <name>4-aminobutanoate</name>
        <dbReference type="ChEBI" id="CHEBI:59888"/>
        <note>ligand shared with the neighboring alpha subunit</note>
    </ligand>
</feature>
<feature type="binding site" description="in chain A" evidence="1">
    <location>
        <position position="227"/>
    </location>
    <ligand>
        <name>4-aminobutanoate</name>
        <dbReference type="ChEBI" id="CHEBI:59888"/>
        <note>ligand shared with the neighboring alpha subunit</note>
    </ligand>
</feature>
<feature type="binding site" description="in chain B" evidence="1">
    <location>
        <position position="227"/>
    </location>
    <ligand>
        <name>histamine</name>
        <dbReference type="ChEBI" id="CHEBI:58432"/>
        <note>ligand shared between two neighboring beta subunits</note>
    </ligand>
</feature>
<feature type="glycosylation site" description="N-linked (GlcNAc...) asparagine" evidence="3">
    <location>
        <position position="33"/>
    </location>
</feature>
<feature type="glycosylation site" description="N-linked (GlcNAc...) asparagine" evidence="3">
    <location>
        <position position="105"/>
    </location>
</feature>
<feature type="glycosylation site" description="N-linked (GlcNAc...) asparagine" evidence="3">
    <location>
        <position position="174"/>
    </location>
</feature>
<feature type="disulfide bond" evidence="1">
    <location>
        <begin position="161"/>
        <end position="175"/>
    </location>
</feature>
<feature type="sequence conflict" description="In Ref. 1; CAA33495." evidence="17" ref="1">
    <original>L</original>
    <variation>M</variation>
    <location>
        <position position="256"/>
    </location>
</feature>
<name>GBRB3_RAT</name>
<organism>
    <name type="scientific">Rattus norvegicus</name>
    <name type="common">Rat</name>
    <dbReference type="NCBI Taxonomy" id="10116"/>
    <lineage>
        <taxon>Eukaryota</taxon>
        <taxon>Metazoa</taxon>
        <taxon>Chordata</taxon>
        <taxon>Craniata</taxon>
        <taxon>Vertebrata</taxon>
        <taxon>Euteleostomi</taxon>
        <taxon>Mammalia</taxon>
        <taxon>Eutheria</taxon>
        <taxon>Euarchontoglires</taxon>
        <taxon>Glires</taxon>
        <taxon>Rodentia</taxon>
        <taxon>Myomorpha</taxon>
        <taxon>Muroidea</taxon>
        <taxon>Muridae</taxon>
        <taxon>Murinae</taxon>
        <taxon>Rattus</taxon>
    </lineage>
</organism>
<comment type="function">
    <text evidence="1 2 4 8 9 11 12 13">Beta subunit of the heteropentameric ligand-gated chloride channel gated by gamma-aminobutyric acid (GABA), a major inhibitory neurotransmitter in the brain (PubMed:10462548, PubMed:2540033, PubMed:2548852, PubMed:9882711). GABA-gated chloride channels, also named GABA(A) receptors (GABAAR), consist of five subunits arranged around a central pore and contain GABA active binding site(s) located at the alpha and beta subunit interface(s) (PubMed:9092594). GABAARs containing beta-3/GABRB3 subunit are found at both synaptic and extrasynaptic sites (PubMed:9464994). When activated by GABA, GABAARs selectively allow the flow of chloride anions across the cell membrane down their electrochemical gradient (PubMed:10462548, PubMed:2540033, PubMed:9882711). Chloride influx into the postsynaptic neuron following GABAAR opening decreases the neuron ability to generate a new action potential, thereby reducing nerve transmission (PubMed:2540033). GABAARs containing alpha-1 and beta-3 subunits exhibit synaptogenic activity; the gamma-2 subunit being necessary but not sufficient to induce rapid synaptic contacts formation (By similarity). Extrasynaptic beta-3 receptors contribute to the tonic GABAergic inhibition (PubMed:9464994). GABAARs containing alpha-1, beta-3 and epsilon subunits may permit spontaneous chloride channel activity while preserving the structural information required for GABA-gated openings (PubMed:9882711). Beta-containing GABAARs can simultaneously bind GABA and histamine where histamine binds at the interface of two neighboring beta subunits, which may be involved in the regulation of sleep and wakefulness (By similarity). Plays an important role in somatosensation and in the production of antinociception (By similarity).</text>
</comment>
<comment type="catalytic activity">
    <reaction evidence="4 8 13">
        <text>chloride(in) = chloride(out)</text>
        <dbReference type="Rhea" id="RHEA:29823"/>
        <dbReference type="ChEBI" id="CHEBI:17996"/>
    </reaction>
</comment>
<comment type="activity regulation">
    <text evidence="1 4 13">Potentiated by pentobarbital, loreclezole and alphaxalone (PubMed:10462548, PubMed:9882711). Potentiated by histamine (By similarity). Allosterically inhibited by pregnenolone sulfate (PubMed:10462548). Inhibited by zinc and furosemide (PubMed:10462548, PubMed:9882711). Beta-3-containing GABAAR are potentiated by lanthanum when associated with alpha-1 subunit and inhibited by lanthanum when associated with alpha-5 subunit (PubMed:10462548, PubMed:9882711).</text>
</comment>
<comment type="subunit">
    <text evidence="1 2 4 5 6 7 8 9 10 11 13">Heteropentamer, formed by a combination of alpha (GABRA1-6), beta (GABRB1-3), gamma (GABRG1-3), delta (GABRD), epsilon (GABRE), rho (GABRR1-3), pi (GABRP) and theta (GABRQ) chains, each subunit exhibiting distinct physiological and pharmacological properties (PubMed:10462548, PubMed:2540033, PubMed:2548852, PubMed:9092594, PubMed:9882711). Can form functional homopentamers (in vitro) (By similarity). Interacts with UBQLN1 (PubMed:11528422). May interact with KIF21B (PubMed:25172774). Identified in a complex of 720 kDa composed of LHFPL4, NLGN2, GABRA1, GABRB2, GABRG2 and GABRB3 (PubMed:28279354). Interacts with LHFPL4 (By similarity). Interacts with GIT1; this interaction is required for synaptic GABRB3 surface stability and inhibitory synapse strength (PubMed:25284783).</text>
</comment>
<comment type="interaction">
    <interactant intactId="EBI-6257937">
        <id>P63079</id>
    </interactant>
    <interactant intactId="EBI-6257913">
        <id>Q7TSU1</id>
        <label>Arfgef2</label>
    </interactant>
    <organismsDiffer>false</organismsDiffer>
    <experiments>3</experiments>
</comment>
<comment type="subcellular location">
    <subcellularLocation>
        <location evidence="12">Postsynaptic cell membrane</location>
        <topology evidence="1">Multi-pass membrane protein</topology>
    </subcellularLocation>
    <subcellularLocation>
        <location evidence="8 9 11 12">Cell membrane</location>
        <topology evidence="1">Multi-pass membrane protein</topology>
    </subcellularLocation>
    <subcellularLocation>
        <location evidence="6">Cytoplasmic vesicle membrane</location>
    </subcellularLocation>
    <text evidence="12">The beta-3 subunits are present in Golgi synapses and on the extrasynaptic membranes (when coassembled with alpha-1/6 and gamma-2 subunits), and in some of the mossy fiber to granule cell synapses (when coassembled with alpha-6 and gamma-2 subunits) (PubMed:9464994). The beta-3 subunits, when coassembled with alpha-6 and delta subunits, are found only on the extrasynaptic somatic and dendritic membranes (PubMed:9464994).</text>
</comment>
<comment type="tissue specificity">
    <text evidence="6 12">Expressed in brain (at protein level), in cerebellar granule cells.</text>
</comment>
<comment type="domain">
    <text evidence="1">GABAARs subunits share a common topological structure: a peptide sequence made up of a long extracellular N-terminal, four transmembrane domains, intracellular or cytoplasmic domain located between the third and the fourth transmembrane domains.</text>
</comment>
<comment type="similarity">
    <text evidence="17">Belongs to the ligand-gated ion channel (TC 1.A.9) family. Gamma-aminobutyric acid receptor (TC 1.A.9.5) subfamily. GABRB3 sub-subfamily.</text>
</comment>
<protein>
    <recommendedName>
        <fullName evidence="15">Gamma-aminobutyric acid receptor subunit beta-3</fullName>
    </recommendedName>
    <alternativeName>
        <fullName evidence="14">GABA(A) receptor subunit beta-3</fullName>
        <shortName evidence="16">GABAAR subunit beta-3</shortName>
    </alternativeName>
</protein>
<sequence>MWGFAGGRLFGIFSAPVLVAVVCCAQSVNDPGNMSFVKETVDKLLKGYDIRLRPDFGGPPVCVGMNIDIASIDMVSEVNMDYTLTMYFQQYWRDKRLAYSGIPLNLTLDNRVADQLWVPDTYFLNDKKSFVHGVTVKNRMIRLHPDGTVLYGLRITTTAACMMDLRRYPLDEQNCTLEIESYGYTTDDIEFYWRGGDKAVTGVERIELPQFSIVEHRLVSRNVVFATGAYPRLSLSFRLKRNIGYFILQTYMPSILITILSWVSFWINYDASAARVALGITTVLTMTTINTHLRETLPKIPYVKAIDMYLMGCFVFVFLALLEYAFVNYIFFGRGPQRQKKLAEKTAKAKNDRSKSEINRVDAHGNILLAPMDVHNEMNEVAGSVGDTRNSAISFDNSGIQYRKQSMPKEGHGRYMGDRSIPHKKTHLRRRSSQLKIKIPDLTDVNAIDRWSRIVFPFTFSLFNLVYWLYYVN</sequence>
<evidence type="ECO:0000250" key="1">
    <source>
        <dbReference type="UniProtKB" id="P28472"/>
    </source>
</evidence>
<evidence type="ECO:0000250" key="2">
    <source>
        <dbReference type="UniProtKB" id="P63080"/>
    </source>
</evidence>
<evidence type="ECO:0000255" key="3"/>
<evidence type="ECO:0000269" key="4">
    <source>
    </source>
</evidence>
<evidence type="ECO:0000269" key="5">
    <source>
    </source>
</evidence>
<evidence type="ECO:0000269" key="6">
    <source>
    </source>
</evidence>
<evidence type="ECO:0000269" key="7">
    <source>
    </source>
</evidence>
<evidence type="ECO:0000269" key="8">
    <source>
    </source>
</evidence>
<evidence type="ECO:0000269" key="9">
    <source>
    </source>
</evidence>
<evidence type="ECO:0000269" key="10">
    <source>
    </source>
</evidence>
<evidence type="ECO:0000269" key="11">
    <source>
    </source>
</evidence>
<evidence type="ECO:0000269" key="12">
    <source>
    </source>
</evidence>
<evidence type="ECO:0000269" key="13">
    <source>
    </source>
</evidence>
<evidence type="ECO:0000303" key="14">
    <source>
    </source>
</evidence>
<evidence type="ECO:0000303" key="15">
    <source>
    </source>
</evidence>
<evidence type="ECO:0000303" key="16">
    <source>
    </source>
</evidence>
<evidence type="ECO:0000305" key="17"/>
<evidence type="ECO:0000312" key="18">
    <source>
        <dbReference type="RGD" id="2651"/>
    </source>
</evidence>
<dbReference type="EMBL" id="X15468">
    <property type="protein sequence ID" value="CAA33495.1"/>
    <property type="molecule type" value="mRNA"/>
</dbReference>
<dbReference type="EMBL" id="L04310">
    <property type="protein sequence ID" value="AAA41180.1"/>
    <property type="molecule type" value="Genomic_DNA"/>
</dbReference>
<dbReference type="PIR" id="S04466">
    <property type="entry name" value="S04466"/>
</dbReference>
<dbReference type="RefSeq" id="NP_058761.2">
    <property type="nucleotide sequence ID" value="NM_017065.2"/>
</dbReference>
<dbReference type="SMR" id="P63079"/>
<dbReference type="ComplexPortal" id="CPX-280">
    <property type="entry name" value="GABA-A receptor, alpha-4/beta-3/delta"/>
</dbReference>
<dbReference type="ComplexPortal" id="CPX-405">
    <property type="entry name" value="GABA-A receptor, alpha6-beta3-gamma2"/>
</dbReference>
<dbReference type="ComplexPortal" id="CPX-406">
    <property type="entry name" value="GABA-A receptor, alpha6-beta3-delta"/>
</dbReference>
<dbReference type="ComplexPortal" id="CPX-409">
    <property type="entry name" value="GABA-A receptor, alpha3-beta3-gamma2"/>
</dbReference>
<dbReference type="ComplexPortal" id="CPX-410">
    <property type="entry name" value="GABA-A receptor, alpha1-beta3-gamma2"/>
</dbReference>
<dbReference type="ComplexPortal" id="CPX-411">
    <property type="entry name" value="GABA-A receptor, alpha5-beta3-gamma2"/>
</dbReference>
<dbReference type="ComplexPortal" id="CPX-412">
    <property type="entry name" value="GABA-A receptor, alpha2-beta3-gamma2"/>
</dbReference>
<dbReference type="CORUM" id="P63079"/>
<dbReference type="DIP" id="DIP-60770N"/>
<dbReference type="FunCoup" id="P63079">
    <property type="interactions" value="2389"/>
</dbReference>
<dbReference type="IntAct" id="P63079">
    <property type="interactions" value="5"/>
</dbReference>
<dbReference type="STRING" id="10116.ENSRNOP00000071478"/>
<dbReference type="BindingDB" id="P63079"/>
<dbReference type="ChEMBL" id="CHEMBL2111374"/>
<dbReference type="ChEMBL" id="CHEMBL3883322"/>
<dbReference type="ChEMBL" id="CHEMBL4296047"/>
<dbReference type="ChEMBL" id="CHEMBL4296048"/>
<dbReference type="ChEMBL" id="CHEMBL4296049"/>
<dbReference type="ChEMBL" id="CHEMBL4296050"/>
<dbReference type="ChEMBL" id="CHEMBL4296051"/>
<dbReference type="ChEMBL" id="CHEMBL4296052"/>
<dbReference type="ChEMBL" id="CHEMBL4296053"/>
<dbReference type="ChEMBL" id="CHEMBL4296054"/>
<dbReference type="ChEMBL" id="CHEMBL4296060"/>
<dbReference type="ChEMBL" id="CHEMBL4296061"/>
<dbReference type="ChEMBL" id="CHEMBL4296062"/>
<dbReference type="ChEMBL" id="CHEMBL5291947"/>
<dbReference type="ChEMBL" id="CHEMBL5291948"/>
<dbReference type="ChEMBL" id="CHEMBL5291950"/>
<dbReference type="DrugCentral" id="P63079"/>
<dbReference type="GlyCosmos" id="P63079">
    <property type="glycosylation" value="3 sites, No reported glycans"/>
</dbReference>
<dbReference type="GlyGen" id="P63079">
    <property type="glycosylation" value="3 sites, 1 N-linked glycan (1 site)"/>
</dbReference>
<dbReference type="iPTMnet" id="P63079"/>
<dbReference type="PhosphoSitePlus" id="P63079"/>
<dbReference type="PaxDb" id="10116-ENSRNOP00000061969"/>
<dbReference type="ABCD" id="P63079">
    <property type="antibodies" value="2 sequenced antibodies"/>
</dbReference>
<dbReference type="Ensembl" id="ENSRNOT00000113752.1">
    <property type="protein sequence ID" value="ENSRNOP00000085111.1"/>
    <property type="gene ID" value="ENSRNOG00000060599.2"/>
</dbReference>
<dbReference type="GeneID" id="24922"/>
<dbReference type="KEGG" id="rno:24922"/>
<dbReference type="UCSC" id="RGD:2651">
    <property type="organism name" value="rat"/>
</dbReference>
<dbReference type="AGR" id="RGD:2651"/>
<dbReference type="CTD" id="2562"/>
<dbReference type="RGD" id="2651">
    <property type="gene designation" value="Gabrb3"/>
</dbReference>
<dbReference type="eggNOG" id="KOG3643">
    <property type="taxonomic scope" value="Eukaryota"/>
</dbReference>
<dbReference type="GeneTree" id="ENSGT00940000154713"/>
<dbReference type="InParanoid" id="P63079"/>
<dbReference type="PhylomeDB" id="P63079"/>
<dbReference type="Reactome" id="R-RNO-977443">
    <property type="pathway name" value="GABA receptor activation"/>
</dbReference>
<dbReference type="PRO" id="PR:P63079"/>
<dbReference type="Proteomes" id="UP000002494">
    <property type="component" value="Chromosome 1"/>
</dbReference>
<dbReference type="GO" id="GO:0009986">
    <property type="term" value="C:cell surface"/>
    <property type="evidence" value="ECO:0000266"/>
    <property type="project" value="RGD"/>
</dbReference>
<dbReference type="GO" id="GO:0034707">
    <property type="term" value="C:chloride channel complex"/>
    <property type="evidence" value="ECO:0007669"/>
    <property type="project" value="UniProtKB-KW"/>
</dbReference>
<dbReference type="GO" id="GO:0005737">
    <property type="term" value="C:cytoplasm"/>
    <property type="evidence" value="ECO:0000314"/>
    <property type="project" value="RGD"/>
</dbReference>
<dbReference type="GO" id="GO:0030659">
    <property type="term" value="C:cytoplasmic vesicle membrane"/>
    <property type="evidence" value="ECO:0007669"/>
    <property type="project" value="UniProtKB-SubCell"/>
</dbReference>
<dbReference type="GO" id="GO:0043197">
    <property type="term" value="C:dendritic spine"/>
    <property type="evidence" value="ECO:0000266"/>
    <property type="project" value="RGD"/>
</dbReference>
<dbReference type="GO" id="GO:1902711">
    <property type="term" value="C:GABA-A receptor complex"/>
    <property type="evidence" value="ECO:0000353"/>
    <property type="project" value="ComplexPortal"/>
</dbReference>
<dbReference type="GO" id="GO:0098982">
    <property type="term" value="C:GABA-ergic synapse"/>
    <property type="evidence" value="ECO:0000314"/>
    <property type="project" value="SynGO"/>
</dbReference>
<dbReference type="GO" id="GO:0060077">
    <property type="term" value="C:inhibitory synapse"/>
    <property type="evidence" value="ECO:0000314"/>
    <property type="project" value="MGI"/>
</dbReference>
<dbReference type="GO" id="GO:0005886">
    <property type="term" value="C:plasma membrane"/>
    <property type="evidence" value="ECO:0000314"/>
    <property type="project" value="UniProtKB"/>
</dbReference>
<dbReference type="GO" id="GO:0045211">
    <property type="term" value="C:postsynaptic membrane"/>
    <property type="evidence" value="ECO:0000314"/>
    <property type="project" value="SynGO"/>
</dbReference>
<dbReference type="GO" id="GO:0099634">
    <property type="term" value="C:postsynaptic specialization membrane"/>
    <property type="evidence" value="ECO:0000314"/>
    <property type="project" value="UniProtKB"/>
</dbReference>
<dbReference type="GO" id="GO:0061827">
    <property type="term" value="C:sperm head"/>
    <property type="evidence" value="ECO:0000314"/>
    <property type="project" value="RGD"/>
</dbReference>
<dbReference type="GO" id="GO:0043195">
    <property type="term" value="C:terminal bouton"/>
    <property type="evidence" value="ECO:0000314"/>
    <property type="project" value="RGD"/>
</dbReference>
<dbReference type="GO" id="GO:0035612">
    <property type="term" value="F:AP-2 adaptor complex binding"/>
    <property type="evidence" value="ECO:0000353"/>
    <property type="project" value="RGD"/>
</dbReference>
<dbReference type="GO" id="GO:0005254">
    <property type="term" value="F:chloride channel activity"/>
    <property type="evidence" value="ECO:0000314"/>
    <property type="project" value="RGD"/>
</dbReference>
<dbReference type="GO" id="GO:0004890">
    <property type="term" value="F:GABA-A receptor activity"/>
    <property type="evidence" value="ECO:0000314"/>
    <property type="project" value="UniProtKB"/>
</dbReference>
<dbReference type="GO" id="GO:0022851">
    <property type="term" value="F:GABA-gated chloride ion channel activity"/>
    <property type="evidence" value="ECO:0000314"/>
    <property type="project" value="UniProtKB"/>
</dbReference>
<dbReference type="GO" id="GO:0042802">
    <property type="term" value="F:identical protein binding"/>
    <property type="evidence" value="ECO:0000266"/>
    <property type="project" value="RGD"/>
</dbReference>
<dbReference type="GO" id="GO:0005216">
    <property type="term" value="F:monoatomic ion channel activity"/>
    <property type="evidence" value="ECO:0000266"/>
    <property type="project" value="RGD"/>
</dbReference>
<dbReference type="GO" id="GO:1904315">
    <property type="term" value="F:transmitter-gated monoatomic ion channel activity involved in regulation of postsynaptic membrane potential"/>
    <property type="evidence" value="ECO:0000266"/>
    <property type="project" value="RGD"/>
</dbReference>
<dbReference type="GO" id="GO:0007420">
    <property type="term" value="P:brain development"/>
    <property type="evidence" value="ECO:0000266"/>
    <property type="project" value="RGD"/>
</dbReference>
<dbReference type="GO" id="GO:0071420">
    <property type="term" value="P:cellular response to histamine"/>
    <property type="evidence" value="ECO:0000250"/>
    <property type="project" value="UniProtKB"/>
</dbReference>
<dbReference type="GO" id="GO:0071294">
    <property type="term" value="P:cellular response to zinc ion"/>
    <property type="evidence" value="ECO:0000266"/>
    <property type="project" value="RGD"/>
</dbReference>
<dbReference type="GO" id="GO:0021549">
    <property type="term" value="P:cerebellum development"/>
    <property type="evidence" value="ECO:0000266"/>
    <property type="project" value="RGD"/>
</dbReference>
<dbReference type="GO" id="GO:1902476">
    <property type="term" value="P:chloride transmembrane transport"/>
    <property type="evidence" value="ECO:0000266"/>
    <property type="project" value="RGD"/>
</dbReference>
<dbReference type="GO" id="GO:0042747">
    <property type="term" value="P:circadian sleep/wake cycle, REM sleep"/>
    <property type="evidence" value="ECO:0000266"/>
    <property type="project" value="RGD"/>
</dbReference>
<dbReference type="GO" id="GO:0090102">
    <property type="term" value="P:cochlea development"/>
    <property type="evidence" value="ECO:0000266"/>
    <property type="project" value="RGD"/>
</dbReference>
<dbReference type="GO" id="GO:0035640">
    <property type="term" value="P:exploration behavior"/>
    <property type="evidence" value="ECO:0000266"/>
    <property type="project" value="RGD"/>
</dbReference>
<dbReference type="GO" id="GO:0007214">
    <property type="term" value="P:gamma-aminobutyric acid signaling pathway"/>
    <property type="evidence" value="ECO:0000250"/>
    <property type="project" value="UniProtKB"/>
</dbReference>
<dbReference type="GO" id="GO:0060022">
    <property type="term" value="P:hard palate development"/>
    <property type="evidence" value="ECO:0000266"/>
    <property type="project" value="RGD"/>
</dbReference>
<dbReference type="GO" id="GO:0060080">
    <property type="term" value="P:inhibitory postsynaptic potential"/>
    <property type="evidence" value="ECO:0000266"/>
    <property type="project" value="RGD"/>
</dbReference>
<dbReference type="GO" id="GO:1904862">
    <property type="term" value="P:inhibitory synapse assembly"/>
    <property type="evidence" value="ECO:0000250"/>
    <property type="project" value="UniProtKB"/>
</dbReference>
<dbReference type="GO" id="GO:0060119">
    <property type="term" value="P:inner ear receptor cell development"/>
    <property type="evidence" value="ECO:0000266"/>
    <property type="project" value="RGD"/>
</dbReference>
<dbReference type="GO" id="GO:0060384">
    <property type="term" value="P:innervation"/>
    <property type="evidence" value="ECO:0000266"/>
    <property type="project" value="RGD"/>
</dbReference>
<dbReference type="GO" id="GO:0007612">
    <property type="term" value="P:learning"/>
    <property type="evidence" value="ECO:0000266"/>
    <property type="project" value="RGD"/>
</dbReference>
<dbReference type="GO" id="GO:0007613">
    <property type="term" value="P:memory"/>
    <property type="evidence" value="ECO:0000266"/>
    <property type="project" value="RGD"/>
</dbReference>
<dbReference type="GO" id="GO:0061744">
    <property type="term" value="P:motor behavior"/>
    <property type="evidence" value="ECO:0000266"/>
    <property type="project" value="RGD"/>
</dbReference>
<dbReference type="GO" id="GO:0007399">
    <property type="term" value="P:nervous system development"/>
    <property type="evidence" value="ECO:0000266"/>
    <property type="project" value="RGD"/>
</dbReference>
<dbReference type="GO" id="GO:0048666">
    <property type="term" value="P:neuron development"/>
    <property type="evidence" value="ECO:0000266"/>
    <property type="project" value="RGD"/>
</dbReference>
<dbReference type="GO" id="GO:0019098">
    <property type="term" value="P:reproductive behavior"/>
    <property type="evidence" value="ECO:0000266"/>
    <property type="project" value="RGD"/>
</dbReference>
<dbReference type="GO" id="GO:0072347">
    <property type="term" value="P:response to anesthetic"/>
    <property type="evidence" value="ECO:0000266"/>
    <property type="project" value="RGD"/>
</dbReference>
<dbReference type="GO" id="GO:0010996">
    <property type="term" value="P:response to auditory stimulus"/>
    <property type="evidence" value="ECO:0000270"/>
    <property type="project" value="RGD"/>
</dbReference>
<dbReference type="GO" id="GO:0009410">
    <property type="term" value="P:response to xenobiotic stimulus"/>
    <property type="evidence" value="ECO:0000266"/>
    <property type="project" value="RGD"/>
</dbReference>
<dbReference type="GO" id="GO:0060021">
    <property type="term" value="P:roof of mouth development"/>
    <property type="evidence" value="ECO:0000250"/>
    <property type="project" value="UniProtKB"/>
</dbReference>
<dbReference type="GO" id="GO:0035176">
    <property type="term" value="P:social behavior"/>
    <property type="evidence" value="ECO:0000266"/>
    <property type="project" value="RGD"/>
</dbReference>
<dbReference type="GO" id="GO:0051932">
    <property type="term" value="P:synaptic transmission, GABAergic"/>
    <property type="evidence" value="ECO:0000314"/>
    <property type="project" value="RGD"/>
</dbReference>
<dbReference type="CDD" id="cd18999">
    <property type="entry name" value="LGIC_ECD_GABAAR_B"/>
    <property type="match status" value="1"/>
</dbReference>
<dbReference type="CDD" id="cd19053">
    <property type="entry name" value="LGIC_TM_GABAAR_beta"/>
    <property type="match status" value="1"/>
</dbReference>
<dbReference type="FunFam" id="1.20.58.390:FF:000004">
    <property type="entry name" value="Gamma-aminobutyric acid receptor subunit beta-2 isoform A"/>
    <property type="match status" value="1"/>
</dbReference>
<dbReference type="FunFam" id="2.70.170.10:FF:000004">
    <property type="entry name" value="Gamma-aminobutyric acid receptor subunit beta-2 isoform A"/>
    <property type="match status" value="1"/>
</dbReference>
<dbReference type="Gene3D" id="2.70.170.10">
    <property type="entry name" value="Neurotransmitter-gated ion-channel ligand-binding domain"/>
    <property type="match status" value="1"/>
</dbReference>
<dbReference type="Gene3D" id="1.20.58.390">
    <property type="entry name" value="Neurotransmitter-gated ion-channel transmembrane domain"/>
    <property type="match status" value="1"/>
</dbReference>
<dbReference type="InterPro" id="IPR006028">
    <property type="entry name" value="GABAA/Glycine_rcpt"/>
</dbReference>
<dbReference type="InterPro" id="IPR002289">
    <property type="entry name" value="GABAAb_rcpt"/>
</dbReference>
<dbReference type="InterPro" id="IPR006202">
    <property type="entry name" value="Neur_chan_lig-bd"/>
</dbReference>
<dbReference type="InterPro" id="IPR036734">
    <property type="entry name" value="Neur_chan_lig-bd_sf"/>
</dbReference>
<dbReference type="InterPro" id="IPR006201">
    <property type="entry name" value="Neur_channel"/>
</dbReference>
<dbReference type="InterPro" id="IPR036719">
    <property type="entry name" value="Neuro-gated_channel_TM_sf"/>
</dbReference>
<dbReference type="InterPro" id="IPR038050">
    <property type="entry name" value="Neuro_actylchol_rec"/>
</dbReference>
<dbReference type="InterPro" id="IPR006029">
    <property type="entry name" value="Neurotrans-gated_channel_TM"/>
</dbReference>
<dbReference type="InterPro" id="IPR018000">
    <property type="entry name" value="Neurotransmitter_ion_chnl_CS"/>
</dbReference>
<dbReference type="NCBIfam" id="TIGR00860">
    <property type="entry name" value="LIC"/>
    <property type="match status" value="1"/>
</dbReference>
<dbReference type="PANTHER" id="PTHR18945">
    <property type="entry name" value="NEUROTRANSMITTER GATED ION CHANNEL"/>
    <property type="match status" value="1"/>
</dbReference>
<dbReference type="Pfam" id="PF02931">
    <property type="entry name" value="Neur_chan_LBD"/>
    <property type="match status" value="1"/>
</dbReference>
<dbReference type="Pfam" id="PF02932">
    <property type="entry name" value="Neur_chan_memb"/>
    <property type="match status" value="1"/>
</dbReference>
<dbReference type="PRINTS" id="PR01160">
    <property type="entry name" value="GABAARBETA"/>
</dbReference>
<dbReference type="PRINTS" id="PR00253">
    <property type="entry name" value="GABAARECEPTR"/>
</dbReference>
<dbReference type="PRINTS" id="PR00252">
    <property type="entry name" value="NRIONCHANNEL"/>
</dbReference>
<dbReference type="SUPFAM" id="SSF90112">
    <property type="entry name" value="Neurotransmitter-gated ion-channel transmembrane pore"/>
    <property type="match status" value="1"/>
</dbReference>
<dbReference type="SUPFAM" id="SSF63712">
    <property type="entry name" value="Nicotinic receptor ligand binding domain-like"/>
    <property type="match status" value="1"/>
</dbReference>
<dbReference type="PROSITE" id="PS00236">
    <property type="entry name" value="NEUROTR_ION_CHANNEL"/>
    <property type="match status" value="1"/>
</dbReference>
<reference key="1">
    <citation type="journal article" date="1989" name="EMBO J.">
        <title>GABAA receptor beta subunit heterogeneity: functional expression of cloned cDNAs.</title>
        <authorList>
            <person name="Ymer S."/>
            <person name="Schofield P.R."/>
            <person name="Draguhn A."/>
            <person name="Werner P."/>
            <person name="Koehler M."/>
            <person name="Seeburg P.H."/>
        </authorList>
    </citation>
    <scope>NUCLEOTIDE SEQUENCE [MRNA]</scope>
    <scope>FUNCTION</scope>
    <scope>SUBCELLULAR LOCATION</scope>
    <scope>SUBUNIT</scope>
    <source>
        <tissue>Brain</tissue>
    </source>
</reference>
<reference key="2">
    <citation type="journal article" date="1989" name="FEBS Lett.">
        <title>Cloning and expression of a novel rat GABAA receptor.</title>
        <authorList>
            <person name="Lolait S.J."/>
            <person name="O'Carroll A.-M."/>
            <person name="Kusano K."/>
            <person name="Muller J.-M."/>
            <person name="Brownstein M.J."/>
            <person name="Mahan L.C."/>
        </authorList>
    </citation>
    <scope>NUCLEOTIDE SEQUENCE [MRNA]</scope>
    <scope>FUNCTION</scope>
    <scope>TRANSPORTER ACTIVITY</scope>
    <scope>SUBCELLULAR LOCATION</scope>
    <scope>SUBUNIT</scope>
</reference>
<reference key="3">
    <citation type="journal article" date="1993" name="J. Biol. Chem.">
        <title>A strong promoter element is located between alternative exons of a gene encoding the human gamma-aminobutyric acid-type A receptor beta 3 subunit (GABRB3).</title>
        <authorList>
            <person name="Kirkness E.F."/>
            <person name="Fraser C.M."/>
        </authorList>
    </citation>
    <scope>NUCLEOTIDE SEQUENCE [GENOMIC DNA] OF 1-80</scope>
    <source>
        <strain>Sprague-Dawley</strain>
        <tissue>Liver</tissue>
    </source>
</reference>
<reference key="4">
    <citation type="journal article" date="1997" name="J. Neurosci.">
        <title>Stoichiometry and assembly of a recombinant GABAA receptor subtype.</title>
        <authorList>
            <person name="Tretter V."/>
            <person name="Ehya N."/>
            <person name="Fuchs K."/>
            <person name="Sieghart W."/>
        </authorList>
    </citation>
    <scope>FUNCTION</scope>
    <scope>SUBCELLULAR LOCATION</scope>
    <scope>SUBUNIT</scope>
</reference>
<reference key="5">
    <citation type="journal article" date="1998" name="J. Neurosci.">
        <title>Segregation of different GABAA receptors to synaptic and extrasynaptic membranes of cerebellar granule cells.</title>
        <authorList>
            <person name="Nusser Z."/>
            <person name="Sieghart W."/>
            <person name="Somogyi P."/>
        </authorList>
    </citation>
    <scope>FUNCTION</scope>
    <scope>SUBCELLULAR LOCATION</scope>
    <scope>TISSUE SPECIFICITY</scope>
</reference>
<reference key="6">
    <citation type="journal article" date="1999" name="Mol. Pharmacol.">
        <title>Spontaneous and gamma-aminobutyric acid (GABA)-activated GABA(A) receptor channels formed by epsilon subunit-containing isoforms.</title>
        <authorList>
            <person name="Neelands T.R."/>
            <person name="Fisher J.L."/>
            <person name="Bianchi M."/>
            <person name="Macdonald R.L."/>
        </authorList>
    </citation>
    <scope>FUNCTION</scope>
    <scope>TRANSPORTER ACTIVITY</scope>
    <scope>ACTIVITY REGULATION</scope>
    <scope>INTERACTION WITH GABRA1 AND GABRE</scope>
</reference>
<reference key="7">
    <citation type="journal article" date="1999" name="Mol. Pharmacol.">
        <title>Incorporation of the pi subunit into functional gamma-aminobutyric Acid(A) receptors.</title>
        <authorList>
            <person name="Neelands T.R."/>
            <person name="Macdonald R.L."/>
        </authorList>
    </citation>
    <scope>FUNCTION</scope>
    <scope>TRANSPORTER ACTIVITY</scope>
    <scope>ACTIVITY REGULATION</scope>
    <scope>TISSUE SPECIFICITY</scope>
    <scope>INTERACTION WITH GABRA5; GABRG3 AND GABRP</scope>
</reference>
<reference key="8">
    <citation type="journal article" date="2001" name="Nat. Neurosci.">
        <title>GABA(A) receptor cell surface number and subunit stability are regulated by the ubiquitin-like protein Plic-1.</title>
        <authorList>
            <person name="Bedford F.K."/>
            <person name="Kittler J.T."/>
            <person name="Muller E."/>
            <person name="Thomas P."/>
            <person name="Uren J.M."/>
            <person name="Merlo D."/>
            <person name="Wisden W."/>
            <person name="Triller A."/>
            <person name="Smart T.G."/>
            <person name="Moss S.J."/>
        </authorList>
    </citation>
    <scope>INTERACTION WITH UBQLN1</scope>
    <source>
        <strain>Sprague-Dawley</strain>
        <tissue>Hippocampus</tissue>
    </source>
</reference>
<reference key="9">
    <citation type="journal article" date="2006" name="Proc. Natl. Acad. Sci. U.S.A.">
        <title>Quantitative phosphoproteomics of vasopressin-sensitive renal cells: regulation of aquaporin-2 phosphorylation at two sites.</title>
        <authorList>
            <person name="Hoffert J.D."/>
            <person name="Pisitkun T."/>
            <person name="Wang G."/>
            <person name="Shen R.-F."/>
            <person name="Knepper M.A."/>
        </authorList>
    </citation>
    <scope>IDENTIFICATION BY MASS SPECTROMETRY [LARGE SCALE ANALYSIS]</scope>
</reference>
<reference key="10">
    <citation type="journal article" date="2014" name="Cell Rep.">
        <title>GIT1 and betaPIX are essential for GABA(A) receptor synaptic stability and inhibitory neurotransmission.</title>
        <authorList>
            <person name="Smith K.R."/>
            <person name="Davenport E.C."/>
            <person name="Wei J."/>
            <person name="Li X."/>
            <person name="Pathania M."/>
            <person name="Vaccaro V."/>
            <person name="Yan Z."/>
            <person name="Kittler J.T."/>
        </authorList>
    </citation>
    <scope>INTERACTION WITH GIT1</scope>
</reference>
<reference key="11">
    <citation type="journal article" date="2014" name="Eur. J. Cell Biol.">
        <title>The kinesin KIF21B participates in the cell surface delivery of gamma2 subunit-containing GABAA receptors.</title>
        <authorList>
            <person name="Labonte D."/>
            <person name="Thies E."/>
            <person name="Kneussel M."/>
        </authorList>
    </citation>
    <scope>INTERACTION WITH KIF21B</scope>
    <scope>SUBCELLULAR LOCATION</scope>
    <scope>TISSUE SPECIFICITY</scope>
</reference>
<reference key="12">
    <citation type="journal article" date="2017" name="Neuron">
        <title>GARLH family proteins stabilize GABAA receptors at synapses.</title>
        <authorList>
            <person name="Yamasaki T."/>
            <person name="Hoyos-Ramirez E."/>
            <person name="Martenson J.S."/>
            <person name="Morimoto-Tomita M."/>
            <person name="Tomita S."/>
        </authorList>
    </citation>
    <scope>IDENTIFICATION BY MASS SPECTROMETRY</scope>
    <scope>IDENTIFICATION IN A COMPLEX WITH NLGN2; GABRA1; GABRB2; GABRG2 AND GABRB3</scope>
</reference>